<keyword id="KW-0165">Cleavage on pair of basic residues</keyword>
<keyword id="KW-1015">Disulfide bond</keyword>
<keyword id="KW-0872">Ion channel impairing toxin</keyword>
<keyword id="KW-0528">Neurotoxin</keyword>
<keyword id="KW-0964">Secreted</keyword>
<keyword id="KW-0732">Signal</keyword>
<keyword id="KW-0800">Toxin</keyword>
<keyword id="KW-0738">Voltage-gated sodium channel impairing toxin</keyword>
<comment type="function">
    <text evidence="3">This toxin inhibits both the TTX-sensitive and TTX-resistant sodium currents in adult rat dorsal root ganglion neurons. The inhibition on TTX-resistant sodium currents is stronger than on TTX-sensitive sodium currents (PubMed:25600641). When intracranially injected into mice, the toxin induces tremors (50 nM), spasms (100 nM), and death (200 nM) (PubMed:25600641).</text>
</comment>
<comment type="subcellular location">
    <subcellularLocation>
        <location evidence="7">Secreted</location>
    </subcellularLocation>
</comment>
<comment type="tissue specificity">
    <text evidence="7">Expressed by the venom duct.</text>
</comment>
<comment type="domain">
    <text evidence="6">The cysteine framework is XVI (C-C-CC).</text>
</comment>
<comment type="PTM">
    <text evidence="7">Authors of PubMed:25600641 studied the activity of this peptide with the C-terminal Arg residue, which is probably cleaved in the native peptide.</text>
</comment>
<comment type="PTM">
    <text evidence="6">Contains 2 disulfide bonds.</text>
</comment>
<comment type="similarity">
    <text evidence="6">Belongs to the conotoxin M superfamily.</text>
</comment>
<protein>
    <recommendedName>
        <fullName evidence="5">Conotoxin Lt16a</fullName>
    </recommendedName>
    <alternativeName>
        <fullName evidence="4">Lt16.1</fullName>
    </alternativeName>
</protein>
<evidence type="ECO:0000250" key="1"/>
<evidence type="ECO:0000255" key="2"/>
<evidence type="ECO:0000269" key="3">
    <source>
    </source>
</evidence>
<evidence type="ECO:0000303" key="4">
    <source>
    </source>
</evidence>
<evidence type="ECO:0000303" key="5">
    <source>
    </source>
</evidence>
<evidence type="ECO:0000305" key="6"/>
<evidence type="ECO:0000305" key="7">
    <source>
    </source>
</evidence>
<accession>Q2I2P8</accession>
<proteinExistence type="inferred from homology"/>
<feature type="signal peptide" evidence="2">
    <location>
        <begin position="1"/>
        <end position="20"/>
    </location>
</feature>
<feature type="propeptide" id="PRO_0000315522" evidence="1">
    <location>
        <begin position="21"/>
        <end position="54"/>
    </location>
</feature>
<feature type="peptide" id="PRO_0000315523" description="Conotoxin Lt16a">
    <location>
        <begin position="55"/>
        <end position="75"/>
    </location>
</feature>
<feature type="propeptide" id="PRO_0000315524" evidence="6">
    <location>
        <begin position="76"/>
        <end position="83"/>
    </location>
</feature>
<sequence>MPKLGVSLFIFLVLFPLATLQLDGDQSAGRHAQERGEDLFKMYQYLRRALERRRTGEDFLEECMGGCAFDFCCKRSLRDTTSD</sequence>
<reference key="1">
    <citation type="journal article" date="2006" name="Genomics">
        <title>Diversity and evolution of conotoxins based on gene expression profiling of Conus litteratus.</title>
        <authorList>
            <person name="Pi C."/>
            <person name="Liu J."/>
            <person name="Peng C."/>
            <person name="Liu Y."/>
            <person name="Jiang X."/>
            <person name="Zhao Y."/>
            <person name="Tang S."/>
            <person name="Wang L."/>
            <person name="Dong M."/>
            <person name="Chen S."/>
            <person name="Xu A."/>
        </authorList>
    </citation>
    <scope>NUCLEOTIDE SEQUENCE [MRNA]</scope>
    <source>
        <tissue>Venom duct</tissue>
    </source>
</reference>
<reference key="2">
    <citation type="journal article" date="2015" name="Toxicon">
        <title>Soluble expression and sodium channel activity of lt16a, a novel framework XVI conotoxin from the M-superfamily.</title>
        <authorList>
            <person name="Zhou M."/>
            <person name="Wang L."/>
            <person name="Wu Y."/>
            <person name="Liu J."/>
            <person name="Sun D."/>
            <person name="Zhu X."/>
            <person name="Feng Y."/>
            <person name="Qin M."/>
            <person name="Chen S."/>
            <person name="Xu A."/>
        </authorList>
    </citation>
    <scope>FUNCTION</scope>
    <scope>BIOASSAY</scope>
</reference>
<name>CMG1_CONLT</name>
<organism>
    <name type="scientific">Conus litteratus</name>
    <name type="common">Lettered cone</name>
    <dbReference type="NCBI Taxonomy" id="89445"/>
    <lineage>
        <taxon>Eukaryota</taxon>
        <taxon>Metazoa</taxon>
        <taxon>Spiralia</taxon>
        <taxon>Lophotrochozoa</taxon>
        <taxon>Mollusca</taxon>
        <taxon>Gastropoda</taxon>
        <taxon>Caenogastropoda</taxon>
        <taxon>Neogastropoda</taxon>
        <taxon>Conoidea</taxon>
        <taxon>Conidae</taxon>
        <taxon>Conus</taxon>
        <taxon>Elisaconus</taxon>
    </lineage>
</organism>
<dbReference type="EMBL" id="DQ345384">
    <property type="protein sequence ID" value="ABC74992.1"/>
    <property type="molecule type" value="mRNA"/>
</dbReference>
<dbReference type="ConoServer" id="1170">
    <property type="toxin name" value="LtXVIA precursor"/>
</dbReference>
<dbReference type="GO" id="GO:0005576">
    <property type="term" value="C:extracellular region"/>
    <property type="evidence" value="ECO:0007669"/>
    <property type="project" value="UniProtKB-SubCell"/>
</dbReference>
<dbReference type="GO" id="GO:0017080">
    <property type="term" value="F:sodium channel regulator activity"/>
    <property type="evidence" value="ECO:0007669"/>
    <property type="project" value="UniProtKB-KW"/>
</dbReference>
<dbReference type="GO" id="GO:0090729">
    <property type="term" value="F:toxin activity"/>
    <property type="evidence" value="ECO:0007669"/>
    <property type="project" value="UniProtKB-KW"/>
</dbReference>